<comment type="function">
    <text evidence="1">Binds together with bS18 to 16S ribosomal RNA.</text>
</comment>
<comment type="similarity">
    <text evidence="1">Belongs to the bacterial ribosomal protein bS6 family.</text>
</comment>
<protein>
    <recommendedName>
        <fullName evidence="1">Small ribosomal subunit protein bS6</fullName>
    </recommendedName>
    <alternativeName>
        <fullName evidence="3">30S ribosomal protein S6</fullName>
    </alternativeName>
</protein>
<name>RS6_PROM5</name>
<organism>
    <name type="scientific">Prochlorococcus marinus (strain MIT 9515)</name>
    <dbReference type="NCBI Taxonomy" id="167542"/>
    <lineage>
        <taxon>Bacteria</taxon>
        <taxon>Bacillati</taxon>
        <taxon>Cyanobacteriota</taxon>
        <taxon>Cyanophyceae</taxon>
        <taxon>Synechococcales</taxon>
        <taxon>Prochlorococcaceae</taxon>
        <taxon>Prochlorococcus</taxon>
    </lineage>
</organism>
<evidence type="ECO:0000255" key="1">
    <source>
        <dbReference type="HAMAP-Rule" id="MF_00360"/>
    </source>
</evidence>
<evidence type="ECO:0000256" key="2">
    <source>
        <dbReference type="SAM" id="MobiDB-lite"/>
    </source>
</evidence>
<evidence type="ECO:0000305" key="3"/>
<sequence>MTDQIYYETMYILRPDIAEEEVKNHIDKYNKLLEEFGATILDSQMRGKRRLAYQIAKHREGIYVQLSHQGDGQHIFKIEKAMRLSEDVIRYLTVKQEGPLPTPRSSNKSSNQAEKKENENIDSANKSEPKADETDNKKKITLESSTPELEEQVKS</sequence>
<gene>
    <name evidence="1" type="primary">rpsF</name>
    <name evidence="1" type="synonym">rps6</name>
    <name type="ordered locus">P9515_18971</name>
</gene>
<accession>A2BZ93</accession>
<reference key="1">
    <citation type="journal article" date="2007" name="PLoS Genet.">
        <title>Patterns and implications of gene gain and loss in the evolution of Prochlorococcus.</title>
        <authorList>
            <person name="Kettler G.C."/>
            <person name="Martiny A.C."/>
            <person name="Huang K."/>
            <person name="Zucker J."/>
            <person name="Coleman M.L."/>
            <person name="Rodrigue S."/>
            <person name="Chen F."/>
            <person name="Lapidus A."/>
            <person name="Ferriera S."/>
            <person name="Johnson J."/>
            <person name="Steglich C."/>
            <person name="Church G.M."/>
            <person name="Richardson P."/>
            <person name="Chisholm S.W."/>
        </authorList>
    </citation>
    <scope>NUCLEOTIDE SEQUENCE [LARGE SCALE GENOMIC DNA]</scope>
    <source>
        <strain>MIT 9515</strain>
    </source>
</reference>
<dbReference type="EMBL" id="CP000552">
    <property type="protein sequence ID" value="ABM73104.1"/>
    <property type="molecule type" value="Genomic_DNA"/>
</dbReference>
<dbReference type="RefSeq" id="WP_011821188.1">
    <property type="nucleotide sequence ID" value="NC_008817.1"/>
</dbReference>
<dbReference type="SMR" id="A2BZ93"/>
<dbReference type="STRING" id="167542.P9515_18971"/>
<dbReference type="GeneID" id="60201813"/>
<dbReference type="KEGG" id="pmc:P9515_18971"/>
<dbReference type="eggNOG" id="COG0360">
    <property type="taxonomic scope" value="Bacteria"/>
</dbReference>
<dbReference type="HOGENOM" id="CLU_113441_4_2_3"/>
<dbReference type="OrthoDB" id="9812702at2"/>
<dbReference type="Proteomes" id="UP000001589">
    <property type="component" value="Chromosome"/>
</dbReference>
<dbReference type="GO" id="GO:0005737">
    <property type="term" value="C:cytoplasm"/>
    <property type="evidence" value="ECO:0007669"/>
    <property type="project" value="UniProtKB-ARBA"/>
</dbReference>
<dbReference type="GO" id="GO:1990904">
    <property type="term" value="C:ribonucleoprotein complex"/>
    <property type="evidence" value="ECO:0007669"/>
    <property type="project" value="UniProtKB-KW"/>
</dbReference>
<dbReference type="GO" id="GO:0005840">
    <property type="term" value="C:ribosome"/>
    <property type="evidence" value="ECO:0007669"/>
    <property type="project" value="UniProtKB-KW"/>
</dbReference>
<dbReference type="GO" id="GO:0070181">
    <property type="term" value="F:small ribosomal subunit rRNA binding"/>
    <property type="evidence" value="ECO:0007669"/>
    <property type="project" value="TreeGrafter"/>
</dbReference>
<dbReference type="GO" id="GO:0003735">
    <property type="term" value="F:structural constituent of ribosome"/>
    <property type="evidence" value="ECO:0007669"/>
    <property type="project" value="InterPro"/>
</dbReference>
<dbReference type="GO" id="GO:0006412">
    <property type="term" value="P:translation"/>
    <property type="evidence" value="ECO:0007669"/>
    <property type="project" value="UniProtKB-UniRule"/>
</dbReference>
<dbReference type="CDD" id="cd15487">
    <property type="entry name" value="bS6_chloro_cyano"/>
    <property type="match status" value="1"/>
</dbReference>
<dbReference type="Gene3D" id="3.30.70.60">
    <property type="match status" value="1"/>
</dbReference>
<dbReference type="HAMAP" id="MF_00360">
    <property type="entry name" value="Ribosomal_bS6"/>
    <property type="match status" value="1"/>
</dbReference>
<dbReference type="InterPro" id="IPR000529">
    <property type="entry name" value="Ribosomal_bS6"/>
</dbReference>
<dbReference type="InterPro" id="IPR020815">
    <property type="entry name" value="Ribosomal_bS6_CS"/>
</dbReference>
<dbReference type="InterPro" id="IPR035980">
    <property type="entry name" value="Ribosomal_bS6_sf"/>
</dbReference>
<dbReference type="InterPro" id="IPR020814">
    <property type="entry name" value="Ribosomal_S6_plastid/chlpt"/>
</dbReference>
<dbReference type="InterPro" id="IPR014717">
    <property type="entry name" value="Transl_elong_EF1B/ribsomal_bS6"/>
</dbReference>
<dbReference type="NCBIfam" id="TIGR00166">
    <property type="entry name" value="S6"/>
    <property type="match status" value="1"/>
</dbReference>
<dbReference type="PANTHER" id="PTHR21011">
    <property type="entry name" value="MITOCHONDRIAL 28S RIBOSOMAL PROTEIN S6"/>
    <property type="match status" value="1"/>
</dbReference>
<dbReference type="PANTHER" id="PTHR21011:SF1">
    <property type="entry name" value="SMALL RIBOSOMAL SUBUNIT PROTEIN BS6M"/>
    <property type="match status" value="1"/>
</dbReference>
<dbReference type="Pfam" id="PF01250">
    <property type="entry name" value="Ribosomal_S6"/>
    <property type="match status" value="1"/>
</dbReference>
<dbReference type="SUPFAM" id="SSF54995">
    <property type="entry name" value="Ribosomal protein S6"/>
    <property type="match status" value="1"/>
</dbReference>
<dbReference type="PROSITE" id="PS01048">
    <property type="entry name" value="RIBOSOMAL_S6"/>
    <property type="match status" value="1"/>
</dbReference>
<proteinExistence type="inferred from homology"/>
<keyword id="KW-0687">Ribonucleoprotein</keyword>
<keyword id="KW-0689">Ribosomal protein</keyword>
<keyword id="KW-0694">RNA-binding</keyword>
<keyword id="KW-0699">rRNA-binding</keyword>
<feature type="chain" id="PRO_1000005315" description="Small ribosomal subunit protein bS6">
    <location>
        <begin position="1"/>
        <end position="155"/>
    </location>
</feature>
<feature type="region of interest" description="Disordered" evidence="2">
    <location>
        <begin position="94"/>
        <end position="155"/>
    </location>
</feature>
<feature type="compositionally biased region" description="Polar residues" evidence="2">
    <location>
        <begin position="103"/>
        <end position="112"/>
    </location>
</feature>
<feature type="compositionally biased region" description="Basic and acidic residues" evidence="2">
    <location>
        <begin position="113"/>
        <end position="141"/>
    </location>
</feature>